<organism>
    <name type="scientific">Pseudomonas entomophila (strain L48)</name>
    <dbReference type="NCBI Taxonomy" id="384676"/>
    <lineage>
        <taxon>Bacteria</taxon>
        <taxon>Pseudomonadati</taxon>
        <taxon>Pseudomonadota</taxon>
        <taxon>Gammaproteobacteria</taxon>
        <taxon>Pseudomonadales</taxon>
        <taxon>Pseudomonadaceae</taxon>
        <taxon>Pseudomonas</taxon>
    </lineage>
</organism>
<proteinExistence type="inferred from homology"/>
<feature type="chain" id="PRO_0000352951" description="Threonylcarbamoyl-AMP synthase">
    <location>
        <begin position="1"/>
        <end position="185"/>
    </location>
</feature>
<feature type="domain" description="YrdC-like" evidence="1">
    <location>
        <begin position="4"/>
        <end position="185"/>
    </location>
</feature>
<evidence type="ECO:0000255" key="1">
    <source>
        <dbReference type="HAMAP-Rule" id="MF_01852"/>
    </source>
</evidence>
<sequence length="185" mass="20593">MVSSWRVQQAAREVKAGAVIAYPTEAVWGLGCDPWNEDAVYRLLALKSRPVDKGLILIADNIRQFDFLFEDFPQDWIDRMSATWPGPNTWLVPHQDLLPEWVTGQHDTVALRVSDHPQVRELCALVGPLISTSCNPAGRPAAKSRLRVEQYFHNELDMVLGGALGGRKNPSLIRDLATGEVVRPG</sequence>
<reference key="1">
    <citation type="journal article" date="2006" name="Nat. Biotechnol.">
        <title>Complete genome sequence of the entomopathogenic and metabolically versatile soil bacterium Pseudomonas entomophila.</title>
        <authorList>
            <person name="Vodovar N."/>
            <person name="Vallenet D."/>
            <person name="Cruveiller S."/>
            <person name="Rouy Z."/>
            <person name="Barbe V."/>
            <person name="Acosta C."/>
            <person name="Cattolico L."/>
            <person name="Jubin C."/>
            <person name="Lajus A."/>
            <person name="Segurens B."/>
            <person name="Vacherie B."/>
            <person name="Wincker P."/>
            <person name="Weissenbach J."/>
            <person name="Lemaitre B."/>
            <person name="Medigue C."/>
            <person name="Boccard F."/>
        </authorList>
    </citation>
    <scope>NUCLEOTIDE SEQUENCE [LARGE SCALE GENOMIC DNA]</scope>
    <source>
        <strain>L48</strain>
    </source>
</reference>
<name>TSAC_PSEE4</name>
<accession>Q1I2G9</accession>
<keyword id="KW-0067">ATP-binding</keyword>
<keyword id="KW-0963">Cytoplasm</keyword>
<keyword id="KW-0547">Nucleotide-binding</keyword>
<keyword id="KW-0548">Nucleotidyltransferase</keyword>
<keyword id="KW-0808">Transferase</keyword>
<keyword id="KW-0819">tRNA processing</keyword>
<gene>
    <name evidence="1" type="primary">tsaC</name>
    <name type="synonym">rimN</name>
    <name type="ordered locus">PSEEN0027</name>
</gene>
<protein>
    <recommendedName>
        <fullName evidence="1">Threonylcarbamoyl-AMP synthase</fullName>
        <shortName evidence="1">TC-AMP synthase</shortName>
        <ecNumber evidence="1">2.7.7.87</ecNumber>
    </recommendedName>
    <alternativeName>
        <fullName evidence="1">L-threonylcarbamoyladenylate synthase</fullName>
    </alternativeName>
    <alternativeName>
        <fullName evidence="1">t(6)A37 threonylcarbamoyladenosine biosynthesis protein TsaC</fullName>
    </alternativeName>
    <alternativeName>
        <fullName evidence="1">tRNA threonylcarbamoyladenosine biosynthesis protein TsaC</fullName>
    </alternativeName>
</protein>
<dbReference type="EC" id="2.7.7.87" evidence="1"/>
<dbReference type="EMBL" id="CT573326">
    <property type="protein sequence ID" value="CAK13021.1"/>
    <property type="molecule type" value="Genomic_DNA"/>
</dbReference>
<dbReference type="RefSeq" id="WP_011531482.1">
    <property type="nucleotide sequence ID" value="NC_008027.1"/>
</dbReference>
<dbReference type="SMR" id="Q1I2G9"/>
<dbReference type="STRING" id="384676.PSEEN0027"/>
<dbReference type="GeneID" id="32803395"/>
<dbReference type="KEGG" id="pen:PSEEN0027"/>
<dbReference type="eggNOG" id="COG0009">
    <property type="taxonomic scope" value="Bacteria"/>
</dbReference>
<dbReference type="HOGENOM" id="CLU_031397_6_0_6"/>
<dbReference type="OrthoDB" id="9814580at2"/>
<dbReference type="Proteomes" id="UP000000658">
    <property type="component" value="Chromosome"/>
</dbReference>
<dbReference type="GO" id="GO:0005737">
    <property type="term" value="C:cytoplasm"/>
    <property type="evidence" value="ECO:0007669"/>
    <property type="project" value="UniProtKB-SubCell"/>
</dbReference>
<dbReference type="GO" id="GO:0005524">
    <property type="term" value="F:ATP binding"/>
    <property type="evidence" value="ECO:0007669"/>
    <property type="project" value="UniProtKB-UniRule"/>
</dbReference>
<dbReference type="GO" id="GO:0003725">
    <property type="term" value="F:double-stranded RNA binding"/>
    <property type="evidence" value="ECO:0007669"/>
    <property type="project" value="InterPro"/>
</dbReference>
<dbReference type="GO" id="GO:0061710">
    <property type="term" value="F:L-threonylcarbamoyladenylate synthase"/>
    <property type="evidence" value="ECO:0007669"/>
    <property type="project" value="UniProtKB-EC"/>
</dbReference>
<dbReference type="GO" id="GO:0000049">
    <property type="term" value="F:tRNA binding"/>
    <property type="evidence" value="ECO:0007669"/>
    <property type="project" value="TreeGrafter"/>
</dbReference>
<dbReference type="GO" id="GO:0006450">
    <property type="term" value="P:regulation of translational fidelity"/>
    <property type="evidence" value="ECO:0007669"/>
    <property type="project" value="TreeGrafter"/>
</dbReference>
<dbReference type="GO" id="GO:0002949">
    <property type="term" value="P:tRNA threonylcarbamoyladenosine modification"/>
    <property type="evidence" value="ECO:0007669"/>
    <property type="project" value="UniProtKB-UniRule"/>
</dbReference>
<dbReference type="FunFam" id="3.90.870.10:FF:000004">
    <property type="entry name" value="Threonylcarbamoyl-AMP synthase"/>
    <property type="match status" value="1"/>
</dbReference>
<dbReference type="Gene3D" id="3.90.870.10">
    <property type="entry name" value="DHBP synthase"/>
    <property type="match status" value="1"/>
</dbReference>
<dbReference type="HAMAP" id="MF_01852">
    <property type="entry name" value="TsaC"/>
    <property type="match status" value="1"/>
</dbReference>
<dbReference type="InterPro" id="IPR017945">
    <property type="entry name" value="DHBP_synth_RibB-like_a/b_dom"/>
</dbReference>
<dbReference type="InterPro" id="IPR006070">
    <property type="entry name" value="Sua5-like_dom"/>
</dbReference>
<dbReference type="InterPro" id="IPR023535">
    <property type="entry name" value="TC-AMP_synthase"/>
</dbReference>
<dbReference type="InterPro" id="IPR050156">
    <property type="entry name" value="TC-AMP_synthase_SUA5"/>
</dbReference>
<dbReference type="PANTHER" id="PTHR17490">
    <property type="entry name" value="SUA5"/>
    <property type="match status" value="1"/>
</dbReference>
<dbReference type="PANTHER" id="PTHR17490:SF18">
    <property type="entry name" value="THREONYLCARBAMOYL-AMP SYNTHASE"/>
    <property type="match status" value="1"/>
</dbReference>
<dbReference type="Pfam" id="PF01300">
    <property type="entry name" value="Sua5_yciO_yrdC"/>
    <property type="match status" value="1"/>
</dbReference>
<dbReference type="SUPFAM" id="SSF55821">
    <property type="entry name" value="YrdC/RibB"/>
    <property type="match status" value="1"/>
</dbReference>
<dbReference type="PROSITE" id="PS51163">
    <property type="entry name" value="YRDC"/>
    <property type="match status" value="1"/>
</dbReference>
<comment type="function">
    <text evidence="1">Required for the formation of a threonylcarbamoyl group on adenosine at position 37 (t(6)A37) in tRNAs that read codons beginning with adenine. Catalyzes the conversion of L-threonine, HCO(3)(-)/CO(2) and ATP to give threonylcarbamoyl-AMP (TC-AMP) as the acyladenylate intermediate, with the release of diphosphate.</text>
</comment>
<comment type="catalytic activity">
    <reaction evidence="1">
        <text>L-threonine + hydrogencarbonate + ATP = L-threonylcarbamoyladenylate + diphosphate + H2O</text>
        <dbReference type="Rhea" id="RHEA:36407"/>
        <dbReference type="ChEBI" id="CHEBI:15377"/>
        <dbReference type="ChEBI" id="CHEBI:17544"/>
        <dbReference type="ChEBI" id="CHEBI:30616"/>
        <dbReference type="ChEBI" id="CHEBI:33019"/>
        <dbReference type="ChEBI" id="CHEBI:57926"/>
        <dbReference type="ChEBI" id="CHEBI:73682"/>
        <dbReference type="EC" id="2.7.7.87"/>
    </reaction>
</comment>
<comment type="subcellular location">
    <subcellularLocation>
        <location evidence="1">Cytoplasm</location>
    </subcellularLocation>
</comment>
<comment type="similarity">
    <text evidence="1">Belongs to the SUA5 family. TsaC subfamily.</text>
</comment>